<organism>
    <name type="scientific">Shewanella sp. (strain MR-7)</name>
    <dbReference type="NCBI Taxonomy" id="60481"/>
    <lineage>
        <taxon>Bacteria</taxon>
        <taxon>Pseudomonadati</taxon>
        <taxon>Pseudomonadota</taxon>
        <taxon>Gammaproteobacteria</taxon>
        <taxon>Alteromonadales</taxon>
        <taxon>Shewanellaceae</taxon>
        <taxon>Shewanella</taxon>
    </lineage>
</organism>
<accession>Q0I064</accession>
<reference key="1">
    <citation type="submission" date="2006-08" db="EMBL/GenBank/DDBJ databases">
        <title>Complete sequence of chromosome 1 of Shewanella sp. MR-7.</title>
        <authorList>
            <person name="Copeland A."/>
            <person name="Lucas S."/>
            <person name="Lapidus A."/>
            <person name="Barry K."/>
            <person name="Detter J.C."/>
            <person name="Glavina del Rio T."/>
            <person name="Hammon N."/>
            <person name="Israni S."/>
            <person name="Dalin E."/>
            <person name="Tice H."/>
            <person name="Pitluck S."/>
            <person name="Kiss H."/>
            <person name="Brettin T."/>
            <person name="Bruce D."/>
            <person name="Han C."/>
            <person name="Tapia R."/>
            <person name="Gilna P."/>
            <person name="Schmutz J."/>
            <person name="Larimer F."/>
            <person name="Land M."/>
            <person name="Hauser L."/>
            <person name="Kyrpides N."/>
            <person name="Mikhailova N."/>
            <person name="Nealson K."/>
            <person name="Konstantinidis K."/>
            <person name="Klappenbach J."/>
            <person name="Tiedje J."/>
            <person name="Richardson P."/>
        </authorList>
    </citation>
    <scope>NUCLEOTIDE SEQUENCE [LARGE SCALE GENOMIC DNA]</scope>
    <source>
        <strain>MR-7</strain>
    </source>
</reference>
<protein>
    <recommendedName>
        <fullName evidence="1">N-acetyl-gamma-glutamyl-phosphate reductase</fullName>
        <shortName evidence="1">AGPR</shortName>
        <ecNumber evidence="1">1.2.1.38</ecNumber>
    </recommendedName>
    <alternativeName>
        <fullName evidence="1">N-acetyl-glutamate semialdehyde dehydrogenase</fullName>
        <shortName evidence="1">NAGSA dehydrogenase</shortName>
    </alternativeName>
</protein>
<dbReference type="EC" id="1.2.1.38" evidence="1"/>
<dbReference type="EMBL" id="CP000444">
    <property type="protein sequence ID" value="ABI41241.1"/>
    <property type="molecule type" value="Genomic_DNA"/>
</dbReference>
<dbReference type="SMR" id="Q0I064"/>
<dbReference type="KEGG" id="shm:Shewmr7_0236"/>
<dbReference type="HOGENOM" id="CLU_006384_0_1_6"/>
<dbReference type="UniPathway" id="UPA00068">
    <property type="reaction ID" value="UER00108"/>
</dbReference>
<dbReference type="GO" id="GO:0005737">
    <property type="term" value="C:cytoplasm"/>
    <property type="evidence" value="ECO:0007669"/>
    <property type="project" value="UniProtKB-SubCell"/>
</dbReference>
<dbReference type="GO" id="GO:0003942">
    <property type="term" value="F:N-acetyl-gamma-glutamyl-phosphate reductase activity"/>
    <property type="evidence" value="ECO:0007669"/>
    <property type="project" value="UniProtKB-UniRule"/>
</dbReference>
<dbReference type="GO" id="GO:0051287">
    <property type="term" value="F:NAD binding"/>
    <property type="evidence" value="ECO:0007669"/>
    <property type="project" value="InterPro"/>
</dbReference>
<dbReference type="GO" id="GO:0070401">
    <property type="term" value="F:NADP+ binding"/>
    <property type="evidence" value="ECO:0007669"/>
    <property type="project" value="InterPro"/>
</dbReference>
<dbReference type="GO" id="GO:0006526">
    <property type="term" value="P:L-arginine biosynthetic process"/>
    <property type="evidence" value="ECO:0007669"/>
    <property type="project" value="UniProtKB-UniRule"/>
</dbReference>
<dbReference type="CDD" id="cd23934">
    <property type="entry name" value="AGPR_1_C"/>
    <property type="match status" value="1"/>
</dbReference>
<dbReference type="CDD" id="cd17895">
    <property type="entry name" value="AGPR_1_N"/>
    <property type="match status" value="1"/>
</dbReference>
<dbReference type="FunFam" id="3.30.360.10:FF:000014">
    <property type="entry name" value="N-acetyl-gamma-glutamyl-phosphate reductase"/>
    <property type="match status" value="1"/>
</dbReference>
<dbReference type="Gene3D" id="3.30.360.10">
    <property type="entry name" value="Dihydrodipicolinate Reductase, domain 2"/>
    <property type="match status" value="1"/>
</dbReference>
<dbReference type="Gene3D" id="3.40.50.720">
    <property type="entry name" value="NAD(P)-binding Rossmann-like Domain"/>
    <property type="match status" value="1"/>
</dbReference>
<dbReference type="HAMAP" id="MF_00150">
    <property type="entry name" value="ArgC_type1"/>
    <property type="match status" value="1"/>
</dbReference>
<dbReference type="InterPro" id="IPR023013">
    <property type="entry name" value="AGPR_AS"/>
</dbReference>
<dbReference type="InterPro" id="IPR000706">
    <property type="entry name" value="AGPR_type-1"/>
</dbReference>
<dbReference type="InterPro" id="IPR036291">
    <property type="entry name" value="NAD(P)-bd_dom_sf"/>
</dbReference>
<dbReference type="InterPro" id="IPR050085">
    <property type="entry name" value="NAGSA_dehydrogenase"/>
</dbReference>
<dbReference type="InterPro" id="IPR000534">
    <property type="entry name" value="Semialdehyde_DH_NAD-bd"/>
</dbReference>
<dbReference type="NCBIfam" id="TIGR01850">
    <property type="entry name" value="argC"/>
    <property type="match status" value="1"/>
</dbReference>
<dbReference type="PANTHER" id="PTHR32338:SF10">
    <property type="entry name" value="N-ACETYL-GAMMA-GLUTAMYL-PHOSPHATE REDUCTASE, CHLOROPLASTIC-RELATED"/>
    <property type="match status" value="1"/>
</dbReference>
<dbReference type="PANTHER" id="PTHR32338">
    <property type="entry name" value="N-ACETYL-GAMMA-GLUTAMYL-PHOSPHATE REDUCTASE, CHLOROPLASTIC-RELATED-RELATED"/>
    <property type="match status" value="1"/>
</dbReference>
<dbReference type="Pfam" id="PF01118">
    <property type="entry name" value="Semialdhyde_dh"/>
    <property type="match status" value="1"/>
</dbReference>
<dbReference type="Pfam" id="PF22698">
    <property type="entry name" value="Semialdhyde_dhC_1"/>
    <property type="match status" value="1"/>
</dbReference>
<dbReference type="SMART" id="SM00859">
    <property type="entry name" value="Semialdhyde_dh"/>
    <property type="match status" value="1"/>
</dbReference>
<dbReference type="SUPFAM" id="SSF55347">
    <property type="entry name" value="Glyceraldehyde-3-phosphate dehydrogenase-like, C-terminal domain"/>
    <property type="match status" value="1"/>
</dbReference>
<dbReference type="SUPFAM" id="SSF51735">
    <property type="entry name" value="NAD(P)-binding Rossmann-fold domains"/>
    <property type="match status" value="1"/>
</dbReference>
<dbReference type="PROSITE" id="PS01224">
    <property type="entry name" value="ARGC"/>
    <property type="match status" value="1"/>
</dbReference>
<keyword id="KW-0028">Amino-acid biosynthesis</keyword>
<keyword id="KW-0055">Arginine biosynthesis</keyword>
<keyword id="KW-0963">Cytoplasm</keyword>
<keyword id="KW-0521">NADP</keyword>
<keyword id="KW-0560">Oxidoreductase</keyword>
<gene>
    <name evidence="1" type="primary">argC</name>
    <name type="ordered locus">Shewmr7_0236</name>
</gene>
<comment type="function">
    <text evidence="1">Catalyzes the NADPH-dependent reduction of N-acetyl-5-glutamyl phosphate to yield N-acetyl-L-glutamate 5-semialdehyde.</text>
</comment>
<comment type="catalytic activity">
    <reaction evidence="1">
        <text>N-acetyl-L-glutamate 5-semialdehyde + phosphate + NADP(+) = N-acetyl-L-glutamyl 5-phosphate + NADPH + H(+)</text>
        <dbReference type="Rhea" id="RHEA:21588"/>
        <dbReference type="ChEBI" id="CHEBI:15378"/>
        <dbReference type="ChEBI" id="CHEBI:29123"/>
        <dbReference type="ChEBI" id="CHEBI:43474"/>
        <dbReference type="ChEBI" id="CHEBI:57783"/>
        <dbReference type="ChEBI" id="CHEBI:57936"/>
        <dbReference type="ChEBI" id="CHEBI:58349"/>
        <dbReference type="EC" id="1.2.1.38"/>
    </reaction>
</comment>
<comment type="pathway">
    <text evidence="1">Amino-acid biosynthesis; L-arginine biosynthesis; N(2)-acetyl-L-ornithine from L-glutamate: step 3/4.</text>
</comment>
<comment type="subcellular location">
    <subcellularLocation>
        <location evidence="1">Cytoplasm</location>
    </subcellularLocation>
</comment>
<comment type="similarity">
    <text evidence="1">Belongs to the NAGSA dehydrogenase family. Type 1 subfamily.</text>
</comment>
<proteinExistence type="inferred from homology"/>
<name>ARGC_SHESR</name>
<feature type="chain" id="PRO_1000011063" description="N-acetyl-gamma-glutamyl-phosphate reductase">
    <location>
        <begin position="1"/>
        <end position="326"/>
    </location>
</feature>
<feature type="active site" evidence="1">
    <location>
        <position position="155"/>
    </location>
</feature>
<sequence length="326" mass="35107">MKNIAIIGASGYTGAQLTALVHAESELSIQGLYVSENSLDKGRALADLYPVYSHIDLALSPLTEEAKAKIVAEADAVVLATEHSVSLHLAAWFYNQGLAVFDLSGAYRFSDVAQYPKWYGFEHEYPEVLAKAVYGLAEWNAKEVAATKMIAVPGCYPTASLTALKPLKNLLTSAYPVINAVSGVTGAGRKAQLHTSFCEVSLTPYGVLGHRHQPEIATQLGQEVIFTPHLGNFKRGILATITVQLKPGTTTADVAAAYSVYDQAPLVTVKQNQFPKVDDVVLTPNCHLGWKFDENSGYLVVASAIDNLMKGAASQALQCIKIHFNL</sequence>
<evidence type="ECO:0000255" key="1">
    <source>
        <dbReference type="HAMAP-Rule" id="MF_00150"/>
    </source>
</evidence>